<evidence type="ECO:0000250" key="1">
    <source>
        <dbReference type="UniProtKB" id="P55769"/>
    </source>
</evidence>
<evidence type="ECO:0000250" key="2">
    <source>
        <dbReference type="UniProtKB" id="Q9D0T1"/>
    </source>
</evidence>
<evidence type="ECO:0000305" key="3"/>
<evidence type="ECO:0000312" key="4">
    <source>
        <dbReference type="RGD" id="1303103"/>
    </source>
</evidence>
<protein>
    <recommendedName>
        <fullName>NHP2-like protein 1</fullName>
    </recommendedName>
    <alternativeName>
        <fullName>High mobility group-like nuclear protein 2 homolog 1</fullName>
    </alternativeName>
    <alternativeName>
        <fullName>OTK27</fullName>
    </alternativeName>
    <alternativeName>
        <fullName evidence="4">U4/U6.U5 small nuclear ribonucleoprotein SNU13</fullName>
    </alternativeName>
    <alternativeName>
        <fullName>U4/U6.U5 tri-snRNP 15.5 kDa protein</fullName>
    </alternativeName>
    <component>
        <recommendedName>
            <fullName>NHP2-like protein 1, N-terminally processed</fullName>
        </recommendedName>
    </component>
</protein>
<name>NH2L1_RAT</name>
<keyword id="KW-0007">Acetylation</keyword>
<keyword id="KW-0507">mRNA processing</keyword>
<keyword id="KW-0508">mRNA splicing</keyword>
<keyword id="KW-0539">Nucleus</keyword>
<keyword id="KW-0597">Phosphoprotein</keyword>
<keyword id="KW-1185">Reference proteome</keyword>
<keyword id="KW-0687">Ribonucleoprotein</keyword>
<keyword id="KW-0694">RNA-binding</keyword>
<keyword id="KW-0747">Spliceosome</keyword>
<organism>
    <name type="scientific">Rattus norvegicus</name>
    <name type="common">Rat</name>
    <dbReference type="NCBI Taxonomy" id="10116"/>
    <lineage>
        <taxon>Eukaryota</taxon>
        <taxon>Metazoa</taxon>
        <taxon>Chordata</taxon>
        <taxon>Craniata</taxon>
        <taxon>Vertebrata</taxon>
        <taxon>Euteleostomi</taxon>
        <taxon>Mammalia</taxon>
        <taxon>Eutheria</taxon>
        <taxon>Euarchontoglires</taxon>
        <taxon>Glires</taxon>
        <taxon>Rodentia</taxon>
        <taxon>Myomorpha</taxon>
        <taxon>Muroidea</taxon>
        <taxon>Muridae</taxon>
        <taxon>Murinae</taxon>
        <taxon>Rattus</taxon>
    </lineage>
</organism>
<reference key="1">
    <citation type="journal article" date="2004" name="Genome Res.">
        <title>The status, quality, and expansion of the NIH full-length cDNA project: the Mammalian Gene Collection (MGC).</title>
        <authorList>
            <consortium name="The MGC Project Team"/>
        </authorList>
    </citation>
    <scope>NUCLEOTIDE SEQUENCE [LARGE SCALE MRNA]</scope>
    <source>
        <tissue>Pituitary</tissue>
    </source>
</reference>
<reference key="2">
    <citation type="journal article" date="1995" name="Proc. Natl. Acad. Sci. U.S.A.">
        <title>Comparative expressed-sequence-tag analysis of differential gene expression profiles in PC-12 cells before and after nerve growth factor treatment.</title>
        <authorList>
            <person name="Lee N.H."/>
            <person name="Weinstock K.G."/>
            <person name="Kirkness E.F."/>
            <person name="Earle-Hughes J.A."/>
            <person name="Fuldner R.A."/>
            <person name="Marmaras S."/>
            <person name="Glodek A."/>
            <person name="Gocayne J.D."/>
            <person name="Adams M.D."/>
            <person name="Kerlavage A.R."/>
            <person name="Fraser C.M."/>
            <person name="Venter J.C."/>
        </authorList>
    </citation>
    <scope>NUCLEOTIDE SEQUENCE [MRNA] OF 1-95</scope>
</reference>
<proteinExistence type="evidence at transcript level"/>
<gene>
    <name evidence="4" type="primary">Snu13</name>
    <name evidence="4" type="synonym">Nhp2l1</name>
</gene>
<feature type="chain" id="PRO_0000423263" description="NHP2-like protein 1">
    <location>
        <begin position="1"/>
        <end position="128"/>
    </location>
</feature>
<feature type="initiator methionine" description="Removed; alternate" evidence="1">
    <location>
        <position position="1"/>
    </location>
</feature>
<feature type="chain" id="PRO_0000136780" description="NHP2-like protein 1, N-terminally processed">
    <location>
        <begin position="2"/>
        <end position="128"/>
    </location>
</feature>
<feature type="region of interest" description="Interaction with U4 snRNA and U4atac snRNA" evidence="1">
    <location>
        <begin position="36"/>
        <end position="48"/>
    </location>
</feature>
<feature type="region of interest" description="Important for U4 snRNA-binding" evidence="1">
    <location>
        <begin position="96"/>
        <end position="128"/>
    </location>
</feature>
<feature type="site" description="Interaction with U4 snRNA and U4atac snRNA" evidence="1">
    <location>
        <position position="61"/>
    </location>
</feature>
<feature type="site" description="Interaction with U4 snRNA and U4atac snRNA" evidence="1">
    <location>
        <position position="86"/>
    </location>
</feature>
<feature type="modified residue" description="N-acetylmethionine" evidence="1">
    <location>
        <position position="1"/>
    </location>
</feature>
<feature type="modified residue" description="N-acetylthreonine; in NHP2-like protein 1, N-terminally processed" evidence="1">
    <location>
        <position position="2"/>
    </location>
</feature>
<feature type="modified residue" description="N6-acetyllysine" evidence="2">
    <location>
        <position position="21"/>
    </location>
</feature>
<feature type="modified residue" description="Phosphoserine" evidence="1">
    <location>
        <position position="122"/>
    </location>
</feature>
<dbReference type="EMBL" id="BC058493">
    <property type="protein sequence ID" value="AAH58493.1"/>
    <property type="molecule type" value="mRNA"/>
</dbReference>
<dbReference type="EMBL" id="H35080">
    <property type="status" value="NOT_ANNOTATED_CDS"/>
    <property type="molecule type" value="mRNA"/>
</dbReference>
<dbReference type="RefSeq" id="NP_997680.1">
    <property type="nucleotide sequence ID" value="NM_212515.3"/>
</dbReference>
<dbReference type="RefSeq" id="XP_008758813.1">
    <property type="nucleotide sequence ID" value="XM_008760591.2"/>
</dbReference>
<dbReference type="RefSeq" id="XP_008773113.1">
    <property type="nucleotide sequence ID" value="XM_008774891.2"/>
</dbReference>
<dbReference type="BMRB" id="P55770"/>
<dbReference type="SMR" id="P55770"/>
<dbReference type="BioGRID" id="256449">
    <property type="interactions" value="1"/>
</dbReference>
<dbReference type="FunCoup" id="P55770">
    <property type="interactions" value="3541"/>
</dbReference>
<dbReference type="STRING" id="10116.ENSRNOP00000009152"/>
<dbReference type="iPTMnet" id="P55770"/>
<dbReference type="PhosphoSitePlus" id="P55770"/>
<dbReference type="jPOST" id="P55770"/>
<dbReference type="PaxDb" id="10116-ENSRNOP00000009152"/>
<dbReference type="Ensembl" id="ENSRNOT00000009152.6">
    <property type="protein sequence ID" value="ENSRNOP00000009152.4"/>
    <property type="gene ID" value="ENSRNOG00000006762.6"/>
</dbReference>
<dbReference type="Ensembl" id="ENSRNOT00000030108.6">
    <property type="protein sequence ID" value="ENSRNOP00000051559.2"/>
    <property type="gene ID" value="ENSRNOG00000025154.6"/>
</dbReference>
<dbReference type="GeneID" id="300092"/>
<dbReference type="KEGG" id="rno:300092"/>
<dbReference type="UCSC" id="RGD:1303103">
    <property type="organism name" value="rat"/>
</dbReference>
<dbReference type="AGR" id="RGD:1303103"/>
<dbReference type="CTD" id="4809"/>
<dbReference type="RGD" id="1303103">
    <property type="gene designation" value="Snu13"/>
</dbReference>
<dbReference type="eggNOG" id="KOG3387">
    <property type="taxonomic scope" value="Eukaryota"/>
</dbReference>
<dbReference type="GeneTree" id="ENSGT00550000074840"/>
<dbReference type="HOGENOM" id="CLU_084513_4_1_1"/>
<dbReference type="InParanoid" id="P55770"/>
<dbReference type="OMA" id="IKNQIYA"/>
<dbReference type="OrthoDB" id="1924699at2759"/>
<dbReference type="PhylomeDB" id="P55770"/>
<dbReference type="TreeFam" id="TF300184"/>
<dbReference type="Reactome" id="R-RNO-6791226">
    <property type="pathway name" value="Major pathway of rRNA processing in the nucleolus and cytosol"/>
</dbReference>
<dbReference type="Reactome" id="R-RNO-72163">
    <property type="pathway name" value="mRNA Splicing - Major Pathway"/>
</dbReference>
<dbReference type="PRO" id="PR:P55770"/>
<dbReference type="Proteomes" id="UP000002494">
    <property type="component" value="Chromosome 1"/>
</dbReference>
<dbReference type="Proteomes" id="UP000002494">
    <property type="component" value="Chromosome 7"/>
</dbReference>
<dbReference type="Bgee" id="ENSRNOG00000006762">
    <property type="expression patterns" value="Expressed in thymus and 19 other cell types or tissues"/>
</dbReference>
<dbReference type="GO" id="GO:0031428">
    <property type="term" value="C:box C/D methylation guide snoRNP complex"/>
    <property type="evidence" value="ECO:0000266"/>
    <property type="project" value="RGD"/>
</dbReference>
<dbReference type="GO" id="GO:0001651">
    <property type="term" value="C:dense fibrillar component"/>
    <property type="evidence" value="ECO:0000266"/>
    <property type="project" value="RGD"/>
</dbReference>
<dbReference type="GO" id="GO:0005730">
    <property type="term" value="C:nucleolus"/>
    <property type="evidence" value="ECO:0000266"/>
    <property type="project" value="RGD"/>
</dbReference>
<dbReference type="GO" id="GO:0005634">
    <property type="term" value="C:nucleus"/>
    <property type="evidence" value="ECO:0000250"/>
    <property type="project" value="UniProtKB"/>
</dbReference>
<dbReference type="GO" id="GO:0071011">
    <property type="term" value="C:precatalytic spliceosome"/>
    <property type="evidence" value="ECO:0000318"/>
    <property type="project" value="GO_Central"/>
</dbReference>
<dbReference type="GO" id="GO:0032991">
    <property type="term" value="C:protein-containing complex"/>
    <property type="evidence" value="ECO:0000266"/>
    <property type="project" value="RGD"/>
</dbReference>
<dbReference type="GO" id="GO:0032040">
    <property type="term" value="C:small-subunit processome"/>
    <property type="evidence" value="ECO:0000250"/>
    <property type="project" value="UniProtKB"/>
</dbReference>
<dbReference type="GO" id="GO:0071005">
    <property type="term" value="C:U2-type precatalytic spliceosome"/>
    <property type="evidence" value="ECO:0000250"/>
    <property type="project" value="UniProtKB"/>
</dbReference>
<dbReference type="GO" id="GO:0046540">
    <property type="term" value="C:U4/U6 x U5 tri-snRNP complex"/>
    <property type="evidence" value="ECO:0000250"/>
    <property type="project" value="UniProtKB"/>
</dbReference>
<dbReference type="GO" id="GO:0005690">
    <property type="term" value="C:U4atac snRNP"/>
    <property type="evidence" value="ECO:0000250"/>
    <property type="project" value="UniProtKB"/>
</dbReference>
<dbReference type="GO" id="GO:0051117">
    <property type="term" value="F:ATPase binding"/>
    <property type="evidence" value="ECO:0000266"/>
    <property type="project" value="RGD"/>
</dbReference>
<dbReference type="GO" id="GO:0034512">
    <property type="term" value="F:box C/D sno(s)RNA binding"/>
    <property type="evidence" value="ECO:0000266"/>
    <property type="project" value="RGD"/>
</dbReference>
<dbReference type="GO" id="GO:0003723">
    <property type="term" value="F:RNA binding"/>
    <property type="evidence" value="ECO:0000318"/>
    <property type="project" value="GO_Central"/>
</dbReference>
<dbReference type="GO" id="GO:0034511">
    <property type="term" value="F:U3 snoRNA binding"/>
    <property type="evidence" value="ECO:0000266"/>
    <property type="project" value="RGD"/>
</dbReference>
<dbReference type="GO" id="GO:0030621">
    <property type="term" value="F:U4 snRNA binding"/>
    <property type="evidence" value="ECO:0000266"/>
    <property type="project" value="RGD"/>
</dbReference>
<dbReference type="GO" id="GO:0030622">
    <property type="term" value="F:U4atac snRNA binding"/>
    <property type="evidence" value="ECO:0000250"/>
    <property type="project" value="UniProtKB"/>
</dbReference>
<dbReference type="GO" id="GO:0000492">
    <property type="term" value="P:box C/D snoRNP assembly"/>
    <property type="evidence" value="ECO:0000266"/>
    <property type="project" value="RGD"/>
</dbReference>
<dbReference type="GO" id="GO:0030490">
    <property type="term" value="P:maturation of SSU-rRNA"/>
    <property type="evidence" value="ECO:0000318"/>
    <property type="project" value="GO_Central"/>
</dbReference>
<dbReference type="GO" id="GO:0000398">
    <property type="term" value="P:mRNA splicing, via spliceosome"/>
    <property type="evidence" value="ECO:0000250"/>
    <property type="project" value="UniProtKB"/>
</dbReference>
<dbReference type="GO" id="GO:0042274">
    <property type="term" value="P:ribosomal small subunit biogenesis"/>
    <property type="evidence" value="ECO:0000250"/>
    <property type="project" value="UniProtKB"/>
</dbReference>
<dbReference type="GO" id="GO:0007338">
    <property type="term" value="P:single fertilization"/>
    <property type="evidence" value="ECO:0000266"/>
    <property type="project" value="RGD"/>
</dbReference>
<dbReference type="CDD" id="cd21104">
    <property type="entry name" value="SNU13"/>
    <property type="match status" value="1"/>
</dbReference>
<dbReference type="FunFam" id="3.30.1330.30:FF:000002">
    <property type="entry name" value="NHP2-like protein 1 homolog"/>
    <property type="match status" value="1"/>
</dbReference>
<dbReference type="Gene3D" id="3.30.1330.30">
    <property type="match status" value="1"/>
</dbReference>
<dbReference type="InterPro" id="IPR050257">
    <property type="entry name" value="eL8/uL1-like"/>
</dbReference>
<dbReference type="InterPro" id="IPR002415">
    <property type="entry name" value="H/ACA_rnp_Nhp2-like"/>
</dbReference>
<dbReference type="InterPro" id="IPR029064">
    <property type="entry name" value="Ribosomal_eL30-like_sf"/>
</dbReference>
<dbReference type="InterPro" id="IPR004037">
    <property type="entry name" value="Ribosomal_eL8-like_CS"/>
</dbReference>
<dbReference type="InterPro" id="IPR004038">
    <property type="entry name" value="Ribosomal_eL8/eL30/eS12/Gad45"/>
</dbReference>
<dbReference type="InterPro" id="IPR018492">
    <property type="entry name" value="Ribosomal_eL8/Nhp2"/>
</dbReference>
<dbReference type="PANTHER" id="PTHR23105">
    <property type="entry name" value="RIBOSOMAL PROTEIN L7AE FAMILY MEMBER"/>
    <property type="match status" value="1"/>
</dbReference>
<dbReference type="Pfam" id="PF01248">
    <property type="entry name" value="Ribosomal_L7Ae"/>
    <property type="match status" value="1"/>
</dbReference>
<dbReference type="PRINTS" id="PR00881">
    <property type="entry name" value="L7ARS6FAMILY"/>
</dbReference>
<dbReference type="PRINTS" id="PR00883">
    <property type="entry name" value="NUCLEARHMG"/>
</dbReference>
<dbReference type="SUPFAM" id="SSF55315">
    <property type="entry name" value="L30e-like"/>
    <property type="match status" value="1"/>
</dbReference>
<dbReference type="PROSITE" id="PS01082">
    <property type="entry name" value="RIBOSOMAL_L7AE"/>
    <property type="match status" value="1"/>
</dbReference>
<accession>P55770</accession>
<accession>Q6PDV0</accession>
<comment type="function">
    <text evidence="1">Part of the small subunit (SSU) processome, first precursor of the small eukaryotic ribosomal subunit. During the assembly of the SSU processome in the nucleolus, many ribosome biogenesis factors, an RNA chaperone and ribosomal proteins associate with the nascent pre-rRNA and work in concert to generate RNA folding, modifications, rearrangements and cleavage as well as targeted degradation of pre-ribosomal RNA by the RNA exosome. Involved in pre-mRNA splicing as component of the spliceosome. Binds to the 5'-stem-loop of U4 snRNA and thereby contributes to spliceosome assembly. The protein undergoes a conformational change upon RNA-binding. Core component of box C/D small nucleolar ribonucleoprotein (snoRNP) complexes that function in methylation of multiple sites on ribosomal RNAs (rRNAs) and messenger RNAs (mRNAs) (By similarity).</text>
</comment>
<comment type="subunit">
    <text evidence="1">Identified in the spliceosome B complex. Component of the U4/U6-U5 tri-snRNP complex composed of the U4, U6 and U5 snRNAs and at least PRPF3, PRPF4, PRPF6, PRPF8, PRPF31, SNRNP200, TXNL4A, WDR57, SNRNP40, DDX23, CD2BP2, PPIH, NHP2L1, EFTUD2, SART1 and USP39. Interacts with RAD17 and PRPF31. The complex formed by SNU13 and PRPF31 binds U4 snRNA. The complex formed by SNU13 and PRPF31 also binds U4atac snRNA, a characteristic component of specific, less abundant spliceosomal complexes. Part of the small subunit (SSU) processome, composed of more than 70 proteins and the RNA chaperone small nucleolar RNA (snoRNA) U3. Core component of box C/D small nucleolar ribonucleoprotein (snoRNP) particles; the core proteins SNU13, NOP56, NOP58 and FBL or FBLL1 assemble stepwise onto the snoRNA (By similarity).</text>
</comment>
<comment type="subcellular location">
    <subcellularLocation>
        <location evidence="1">Nucleus</location>
    </subcellularLocation>
    <subcellularLocation>
        <location evidence="1">Nucleus</location>
        <location evidence="1">Nucleolus</location>
    </subcellularLocation>
    <text evidence="1">Concentrated in the dense fibrillar component of the nucleolus.</text>
</comment>
<comment type="similarity">
    <text evidence="3">Belongs to the eukaryotic ribosomal protein eL8 family.</text>
</comment>
<comment type="sequence caution" evidence="3">
    <conflict type="frameshift">
        <sequence resource="EMBL" id="H35080"/>
    </conflict>
</comment>
<sequence length="128" mass="14174">MTEADVNPKAYPLADAHLTKKLLDLVQQSCNYKQLRKGANEATKTLNRGISEFIVMAADAEPLEIILHLPLLCEDKNVPYVFVRSKQALGRACGVSRPVIACSVTIKEGSQLKQQIQSIQQSIERLLV</sequence>